<dbReference type="EMBL" id="AF058689">
    <property type="protein sequence ID" value="AAC13725.1"/>
    <property type="molecule type" value="Genomic_DNA"/>
</dbReference>
<dbReference type="EMBL" id="AL157959">
    <property type="protein sequence ID" value="CAM09130.1"/>
    <property type="molecule type" value="Genomic_DNA"/>
</dbReference>
<dbReference type="PIR" id="D81832">
    <property type="entry name" value="D81832"/>
</dbReference>
<dbReference type="RefSeq" id="WP_002246892.1">
    <property type="nucleotide sequence ID" value="NC_003116.1"/>
</dbReference>
<dbReference type="SMR" id="O68937"/>
<dbReference type="EnsemblBacteria" id="CAM09130">
    <property type="protein sequence ID" value="CAM09130"/>
    <property type="gene ID" value="NMA2025"/>
</dbReference>
<dbReference type="KEGG" id="nma:NMA2025"/>
<dbReference type="HOGENOM" id="CLU_024250_0_0_4"/>
<dbReference type="Proteomes" id="UP000000626">
    <property type="component" value="Chromosome"/>
</dbReference>
<dbReference type="GO" id="GO:0009279">
    <property type="term" value="C:cell outer membrane"/>
    <property type="evidence" value="ECO:0007669"/>
    <property type="project" value="UniProtKB-SubCell"/>
</dbReference>
<dbReference type="GO" id="GO:0009986">
    <property type="term" value="C:cell surface"/>
    <property type="evidence" value="ECO:0007669"/>
    <property type="project" value="UniProtKB-SubCell"/>
</dbReference>
<dbReference type="Gene3D" id="2.40.128.240">
    <property type="match status" value="1"/>
</dbReference>
<dbReference type="Gene3D" id="2.40.128.250">
    <property type="match status" value="1"/>
</dbReference>
<dbReference type="Gene3D" id="2.40.160.90">
    <property type="match status" value="2"/>
</dbReference>
<dbReference type="InterPro" id="IPR011250">
    <property type="entry name" value="OMP/PagP_b-brl"/>
</dbReference>
<dbReference type="InterPro" id="IPR001677">
    <property type="entry name" value="TbpB_B_D"/>
</dbReference>
<dbReference type="InterPro" id="IPR035316">
    <property type="entry name" value="TbpB_C-lobe"/>
</dbReference>
<dbReference type="InterPro" id="IPR038197">
    <property type="entry name" value="TbpB_C-lobe_sf"/>
</dbReference>
<dbReference type="InterPro" id="IPR035313">
    <property type="entry name" value="TbpB_N-lobe"/>
</dbReference>
<dbReference type="InterPro" id="IPR038669">
    <property type="entry name" value="TbpB_N-lobe_sf"/>
</dbReference>
<dbReference type="Pfam" id="PF17484">
    <property type="entry name" value="TbpB_A"/>
    <property type="match status" value="1"/>
</dbReference>
<dbReference type="Pfam" id="PF01298">
    <property type="entry name" value="TbpB_B_D"/>
    <property type="match status" value="2"/>
</dbReference>
<dbReference type="Pfam" id="PF17483">
    <property type="entry name" value="TbpB_C"/>
    <property type="match status" value="1"/>
</dbReference>
<dbReference type="SUPFAM" id="SSF56925">
    <property type="entry name" value="OMPA-like"/>
    <property type="match status" value="2"/>
</dbReference>
<keyword id="KW-0998">Cell outer membrane</keyword>
<keyword id="KW-0449">Lipoprotein</keyword>
<keyword id="KW-0472">Membrane</keyword>
<keyword id="KW-0564">Palmitate</keyword>
<keyword id="KW-0675">Receptor</keyword>
<keyword id="KW-0732">Signal</keyword>
<keyword id="KW-0843">Virulence</keyword>
<evidence type="ECO:0000250" key="1"/>
<evidence type="ECO:0000250" key="2">
    <source>
        <dbReference type="UniProtKB" id="Q06988"/>
    </source>
</evidence>
<evidence type="ECO:0000250" key="3">
    <source>
        <dbReference type="UniProtKB" id="Q09057"/>
    </source>
</evidence>
<evidence type="ECO:0000250" key="4">
    <source>
        <dbReference type="UniProtKB" id="Q9K0V0"/>
    </source>
</evidence>
<evidence type="ECO:0000256" key="5">
    <source>
        <dbReference type="SAM" id="MobiDB-lite"/>
    </source>
</evidence>
<evidence type="ECO:0000269" key="6">
    <source>
    </source>
</evidence>
<evidence type="ECO:0000303" key="7">
    <source>
    </source>
</evidence>
<evidence type="ECO:0000305" key="8"/>
<sequence>MNNPLVNQAAMVLPVFLLSACLGGGGSFDLDSVDTEAPRPAPKYQDVSSEKPQAQKDQGGYGFAMRLKRRNWYRQANPKEDEIKLSENDWEQTDNGDIKNPSKQKNIINALTGNNGGASLQDSSQENQGISKVTGHHNFQYVWSGFFYKQIGSTFERKDSSITAARSGPDGYIFYKGKDPSRKLPVSGEVMYKGTWDFLTDVKTSQKFTDLGNTSTRPGDRYSAFSGELDYIVNKDSDKKDEHVGWGLTTEITVDFEKKTLSGKLIKNNRVNNDNDKHTTQYYSLDATLRGNRFSGKAEATDKPKNDGETKEHPFVSDSSSLSGGFFGPKGEELGFRFLSDDQKVAVVGSAKTQDKPRNGAVASGGAGAAASNGAAGTSSENSKLTTVLDAVELTLNDKKIKNLDNFSNAAQLVVDGIMIPLLPEASESGKNQANQGTNGGTAFTRKFNHTPKSDEKDTQAGTAENGNPAASNTAGDANGKTKTYEVEVCCSNLNYLKYGMLTRKNSKSAMQAGESSSQADAKTEQVGQSMFLQGERTDEKEIPNDQNVVYRGSWYGHIANGTSWSGNASDKEGGNRADFTVNFGTKKINGTLTADNRQAATFTIVGDIEGNGFSGTAKTADSGFDLDQSNNTRTPKAYITNAKVQGGFYGPKAEELGGWFAYSDDKQTKNATDASGNGNSASSATVVFGAKRQKPVQ</sequence>
<name>TBPB_NEIMA</name>
<protein>
    <recommendedName>
        <fullName evidence="7">Transferrin-binding protein B</fullName>
        <shortName evidence="7">TbpB</shortName>
    </recommendedName>
    <alternativeName>
        <fullName>Transferrin-binding protein 2</fullName>
        <shortName>TBP-2</shortName>
    </alternativeName>
</protein>
<gene>
    <name evidence="7" type="primary">tbpB</name>
    <name type="synonym">tbp2</name>
    <name type="ordered locus">NMA2025</name>
</gene>
<feature type="signal peptide" evidence="1">
    <location>
        <begin position="1"/>
        <end position="20"/>
    </location>
</feature>
<feature type="chain" id="PRO_0000018192" description="Transferrin-binding protein B">
    <location>
        <begin position="21"/>
        <end position="698"/>
    </location>
</feature>
<feature type="region of interest" description="Disordered" evidence="5">
    <location>
        <begin position="33"/>
        <end position="58"/>
    </location>
</feature>
<feature type="region of interest" description="Disordered" evidence="5">
    <location>
        <begin position="83"/>
        <end position="102"/>
    </location>
</feature>
<feature type="region of interest" description="Disordered" evidence="5">
    <location>
        <begin position="294"/>
        <end position="324"/>
    </location>
</feature>
<feature type="region of interest" description="Disordered" evidence="5">
    <location>
        <begin position="349"/>
        <end position="383"/>
    </location>
</feature>
<feature type="region of interest" description="Disordered" evidence="5">
    <location>
        <begin position="428"/>
        <end position="479"/>
    </location>
</feature>
<feature type="region of interest" description="Disordered" evidence="5">
    <location>
        <begin position="669"/>
        <end position="698"/>
    </location>
</feature>
<feature type="compositionally biased region" description="Polar residues" evidence="5">
    <location>
        <begin position="46"/>
        <end position="56"/>
    </location>
</feature>
<feature type="compositionally biased region" description="Basic and acidic residues" evidence="5">
    <location>
        <begin position="299"/>
        <end position="315"/>
    </location>
</feature>
<feature type="compositionally biased region" description="Low complexity" evidence="5">
    <location>
        <begin position="369"/>
        <end position="383"/>
    </location>
</feature>
<feature type="compositionally biased region" description="Polar residues" evidence="5">
    <location>
        <begin position="460"/>
        <end position="476"/>
    </location>
</feature>
<feature type="compositionally biased region" description="Low complexity" evidence="5">
    <location>
        <begin position="671"/>
        <end position="686"/>
    </location>
</feature>
<feature type="lipid moiety-binding region" description="N-palmitoyl cysteine" evidence="8">
    <location>
        <position position="21"/>
    </location>
</feature>
<feature type="lipid moiety-binding region" description="S-diacylglycerol cysteine" evidence="8">
    <location>
        <position position="21"/>
    </location>
</feature>
<proteinExistence type="inferred from homology"/>
<comment type="function">
    <text evidence="3">Neisseria acquires iron by extracting it from serum transferrin (TF) in its human host. Acts as a TF receptor and is required for TF utilization. Involved in the initial capture of TF. Helps select only those TF molecules that can be used as an iron source and concentrates them on the cell surface, maintaining the iron-loaded status of the TF C-terminal lobe until its delivery to TbpA.</text>
</comment>
<comment type="subunit">
    <text evidence="2 4">Binds only human holo-transferrin (TF), via the TF C-terminus. Forms a large complex with TbpA and TF (By similarity). Interacts via its C-terminal domain with Slam1 (By similarity).</text>
</comment>
<comment type="subcellular location">
    <subcellularLocation>
        <location evidence="8">Cell outer membrane</location>
        <topology evidence="8">Lipid-anchor</topology>
    </subcellularLocation>
    <subcellularLocation>
        <location evidence="2">Cell surface</location>
    </subcellularLocation>
</comment>
<comment type="miscellaneous">
    <text evidence="6">N.meningitidis cells will only bind to human TF, not bovine or porcine TF, explaining at least in part the bacteria's inability to cause infection in non-human hosts.</text>
</comment>
<comment type="similarity">
    <text evidence="8">Belongs to the TbpB family.</text>
</comment>
<accession>O68937</accession>
<accession>A1ITL3</accession>
<reference key="1">
    <citation type="journal article" date="1999" name="Vaccine">
        <title>Human antibody responses to A and C capsular polysaccharides, IgA1 protease and transferrin-binding protein complex stimulated by infection with Neisseria meningitidis of subgroup IV-1 or ET-37 complex.</title>
        <authorList>
            <person name="Brieske N."/>
            <person name="Schenker M."/>
            <person name="Schnibbe T."/>
            <person name="Quentin-Millet M.-J."/>
            <person name="Achtman M."/>
        </authorList>
    </citation>
    <scope>NUCLEOTIDE SEQUENCE [GENOMIC DNA]</scope>
    <source>
        <strain>DSM 15465 / Z2491</strain>
    </source>
</reference>
<reference key="2">
    <citation type="journal article" date="2000" name="Nature">
        <title>Complete DNA sequence of a serogroup A strain of Neisseria meningitidis Z2491.</title>
        <authorList>
            <person name="Parkhill J."/>
            <person name="Achtman M."/>
            <person name="James K.D."/>
            <person name="Bentley S.D."/>
            <person name="Churcher C.M."/>
            <person name="Klee S.R."/>
            <person name="Morelli G."/>
            <person name="Basham D."/>
            <person name="Brown D."/>
            <person name="Chillingworth T."/>
            <person name="Davies R.M."/>
            <person name="Davis P."/>
            <person name="Devlin K."/>
            <person name="Feltwell T."/>
            <person name="Hamlin N."/>
            <person name="Holroyd S."/>
            <person name="Jagels K."/>
            <person name="Leather S."/>
            <person name="Moule S."/>
            <person name="Mungall K.L."/>
            <person name="Quail M.A."/>
            <person name="Rajandream M.A."/>
            <person name="Rutherford K.M."/>
            <person name="Simmonds M."/>
            <person name="Skelton J."/>
            <person name="Whitehead S."/>
            <person name="Spratt B.G."/>
            <person name="Barrell B.G."/>
        </authorList>
    </citation>
    <scope>NUCLEOTIDE SEQUENCE [LARGE SCALE GENOMIC DNA]</scope>
    <source>
        <strain>DSM 15465 / Z2491</strain>
    </source>
</reference>
<reference key="3">
    <citation type="journal article" date="1990" name="Can. J. Microbiol.">
        <title>Receptors for transferrin in pathogenic bacteria are specific for the host's protein.</title>
        <authorList>
            <person name="Schryvers A.B."/>
            <person name="Gonzalez G.C."/>
        </authorList>
    </citation>
    <scope>HOST-SPECIFICITY</scope>
</reference>
<organism>
    <name type="scientific">Neisseria meningitidis serogroup A / serotype 4A (strain DSM 15465 / Z2491)</name>
    <dbReference type="NCBI Taxonomy" id="122587"/>
    <lineage>
        <taxon>Bacteria</taxon>
        <taxon>Pseudomonadati</taxon>
        <taxon>Pseudomonadota</taxon>
        <taxon>Betaproteobacteria</taxon>
        <taxon>Neisseriales</taxon>
        <taxon>Neisseriaceae</taxon>
        <taxon>Neisseria</taxon>
    </lineage>
</organism>